<protein>
    <recommendedName>
        <fullName evidence="1">UDP-N-acetylmuramate--L-alanine ligase</fullName>
        <ecNumber evidence="1">6.3.2.8</ecNumber>
    </recommendedName>
    <alternativeName>
        <fullName evidence="1">UDP-N-acetylmuramoyl-L-alanine synthetase</fullName>
    </alternativeName>
</protein>
<name>MURC_SHEON</name>
<accession>Q8E9P8</accession>
<proteinExistence type="inferred from homology"/>
<reference key="1">
    <citation type="journal article" date="2002" name="Nat. Biotechnol.">
        <title>Genome sequence of the dissimilatory metal ion-reducing bacterium Shewanella oneidensis.</title>
        <authorList>
            <person name="Heidelberg J.F."/>
            <person name="Paulsen I.T."/>
            <person name="Nelson K.E."/>
            <person name="Gaidos E.J."/>
            <person name="Nelson W.C."/>
            <person name="Read T.D."/>
            <person name="Eisen J.A."/>
            <person name="Seshadri R."/>
            <person name="Ward N.L."/>
            <person name="Methe B.A."/>
            <person name="Clayton R.A."/>
            <person name="Meyer T."/>
            <person name="Tsapin A."/>
            <person name="Scott J."/>
            <person name="Beanan M.J."/>
            <person name="Brinkac L.M."/>
            <person name="Daugherty S.C."/>
            <person name="DeBoy R.T."/>
            <person name="Dodson R.J."/>
            <person name="Durkin A.S."/>
            <person name="Haft D.H."/>
            <person name="Kolonay J.F."/>
            <person name="Madupu R."/>
            <person name="Peterson J.D."/>
            <person name="Umayam L.A."/>
            <person name="White O."/>
            <person name="Wolf A.M."/>
            <person name="Vamathevan J.J."/>
            <person name="Weidman J.F."/>
            <person name="Impraim M."/>
            <person name="Lee K."/>
            <person name="Berry K.J."/>
            <person name="Lee C."/>
            <person name="Mueller J."/>
            <person name="Khouri H.M."/>
            <person name="Gill J."/>
            <person name="Utterback T.R."/>
            <person name="McDonald L.A."/>
            <person name="Feldblyum T.V."/>
            <person name="Smith H.O."/>
            <person name="Venter J.C."/>
            <person name="Nealson K.H."/>
            <person name="Fraser C.M."/>
        </authorList>
    </citation>
    <scope>NUCLEOTIDE SEQUENCE [LARGE SCALE GENOMIC DNA]</scope>
    <source>
        <strain>ATCC 700550 / JCM 31522 / CIP 106686 / LMG 19005 / NCIMB 14063 / MR-1</strain>
    </source>
</reference>
<comment type="function">
    <text evidence="1">Cell wall formation.</text>
</comment>
<comment type="catalytic activity">
    <reaction evidence="1">
        <text>UDP-N-acetyl-alpha-D-muramate + L-alanine + ATP = UDP-N-acetyl-alpha-D-muramoyl-L-alanine + ADP + phosphate + H(+)</text>
        <dbReference type="Rhea" id="RHEA:23372"/>
        <dbReference type="ChEBI" id="CHEBI:15378"/>
        <dbReference type="ChEBI" id="CHEBI:30616"/>
        <dbReference type="ChEBI" id="CHEBI:43474"/>
        <dbReference type="ChEBI" id="CHEBI:57972"/>
        <dbReference type="ChEBI" id="CHEBI:70757"/>
        <dbReference type="ChEBI" id="CHEBI:83898"/>
        <dbReference type="ChEBI" id="CHEBI:456216"/>
        <dbReference type="EC" id="6.3.2.8"/>
    </reaction>
</comment>
<comment type="pathway">
    <text evidence="1">Cell wall biogenesis; peptidoglycan biosynthesis.</text>
</comment>
<comment type="subcellular location">
    <subcellularLocation>
        <location evidence="1">Cytoplasm</location>
    </subcellularLocation>
</comment>
<comment type="similarity">
    <text evidence="1">Belongs to the MurCDEF family.</text>
</comment>
<evidence type="ECO:0000255" key="1">
    <source>
        <dbReference type="HAMAP-Rule" id="MF_00046"/>
    </source>
</evidence>
<organism>
    <name type="scientific">Shewanella oneidensis (strain ATCC 700550 / JCM 31522 / CIP 106686 / LMG 19005 / NCIMB 14063 / MR-1)</name>
    <dbReference type="NCBI Taxonomy" id="211586"/>
    <lineage>
        <taxon>Bacteria</taxon>
        <taxon>Pseudomonadati</taxon>
        <taxon>Pseudomonadota</taxon>
        <taxon>Gammaproteobacteria</taxon>
        <taxon>Alteromonadales</taxon>
        <taxon>Shewanellaceae</taxon>
        <taxon>Shewanella</taxon>
    </lineage>
</organism>
<gene>
    <name evidence="1" type="primary">murC</name>
    <name type="ordered locus">SO_4218</name>
</gene>
<feature type="chain" id="PRO_0000182149" description="UDP-N-acetylmuramate--L-alanine ligase">
    <location>
        <begin position="1"/>
        <end position="488"/>
    </location>
</feature>
<feature type="binding site" evidence="1">
    <location>
        <begin position="127"/>
        <end position="133"/>
    </location>
    <ligand>
        <name>ATP</name>
        <dbReference type="ChEBI" id="CHEBI:30616"/>
    </ligand>
</feature>
<dbReference type="EC" id="6.3.2.8" evidence="1"/>
<dbReference type="EMBL" id="AE014299">
    <property type="protein sequence ID" value="AAN57190.1"/>
    <property type="molecule type" value="Genomic_DNA"/>
</dbReference>
<dbReference type="RefSeq" id="NP_719746.1">
    <property type="nucleotide sequence ID" value="NC_004347.2"/>
</dbReference>
<dbReference type="RefSeq" id="WP_011073899.1">
    <property type="nucleotide sequence ID" value="NZ_CP053946.1"/>
</dbReference>
<dbReference type="SMR" id="Q8E9P8"/>
<dbReference type="STRING" id="211586.SO_4218"/>
<dbReference type="PaxDb" id="211586-SO_4218"/>
<dbReference type="KEGG" id="son:SO_4218"/>
<dbReference type="PATRIC" id="fig|211586.12.peg.4076"/>
<dbReference type="eggNOG" id="COG0773">
    <property type="taxonomic scope" value="Bacteria"/>
</dbReference>
<dbReference type="HOGENOM" id="CLU_028104_2_2_6"/>
<dbReference type="OrthoDB" id="9804126at2"/>
<dbReference type="PhylomeDB" id="Q8E9P8"/>
<dbReference type="BioCyc" id="SONE211586:G1GMP-3895-MONOMER"/>
<dbReference type="UniPathway" id="UPA00219"/>
<dbReference type="Proteomes" id="UP000008186">
    <property type="component" value="Chromosome"/>
</dbReference>
<dbReference type="GO" id="GO:0005737">
    <property type="term" value="C:cytoplasm"/>
    <property type="evidence" value="ECO:0007669"/>
    <property type="project" value="UniProtKB-SubCell"/>
</dbReference>
<dbReference type="GO" id="GO:0005524">
    <property type="term" value="F:ATP binding"/>
    <property type="evidence" value="ECO:0007669"/>
    <property type="project" value="UniProtKB-UniRule"/>
</dbReference>
<dbReference type="GO" id="GO:0008763">
    <property type="term" value="F:UDP-N-acetylmuramate-L-alanine ligase activity"/>
    <property type="evidence" value="ECO:0007669"/>
    <property type="project" value="UniProtKB-UniRule"/>
</dbReference>
<dbReference type="GO" id="GO:0051301">
    <property type="term" value="P:cell division"/>
    <property type="evidence" value="ECO:0007669"/>
    <property type="project" value="UniProtKB-KW"/>
</dbReference>
<dbReference type="GO" id="GO:0071555">
    <property type="term" value="P:cell wall organization"/>
    <property type="evidence" value="ECO:0007669"/>
    <property type="project" value="UniProtKB-KW"/>
</dbReference>
<dbReference type="GO" id="GO:0009252">
    <property type="term" value="P:peptidoglycan biosynthetic process"/>
    <property type="evidence" value="ECO:0007669"/>
    <property type="project" value="UniProtKB-UniRule"/>
</dbReference>
<dbReference type="GO" id="GO:0008360">
    <property type="term" value="P:regulation of cell shape"/>
    <property type="evidence" value="ECO:0007669"/>
    <property type="project" value="UniProtKB-KW"/>
</dbReference>
<dbReference type="FunFam" id="3.40.1190.10:FF:000001">
    <property type="entry name" value="UDP-N-acetylmuramate--L-alanine ligase"/>
    <property type="match status" value="1"/>
</dbReference>
<dbReference type="FunFam" id="3.40.50.720:FF:000046">
    <property type="entry name" value="UDP-N-acetylmuramate--L-alanine ligase"/>
    <property type="match status" value="1"/>
</dbReference>
<dbReference type="Gene3D" id="3.90.190.20">
    <property type="entry name" value="Mur ligase, C-terminal domain"/>
    <property type="match status" value="1"/>
</dbReference>
<dbReference type="Gene3D" id="3.40.1190.10">
    <property type="entry name" value="Mur-like, catalytic domain"/>
    <property type="match status" value="1"/>
</dbReference>
<dbReference type="Gene3D" id="3.40.50.720">
    <property type="entry name" value="NAD(P)-binding Rossmann-like Domain"/>
    <property type="match status" value="1"/>
</dbReference>
<dbReference type="HAMAP" id="MF_00046">
    <property type="entry name" value="MurC"/>
    <property type="match status" value="1"/>
</dbReference>
<dbReference type="InterPro" id="IPR036565">
    <property type="entry name" value="Mur-like_cat_sf"/>
</dbReference>
<dbReference type="InterPro" id="IPR004101">
    <property type="entry name" value="Mur_ligase_C"/>
</dbReference>
<dbReference type="InterPro" id="IPR036615">
    <property type="entry name" value="Mur_ligase_C_dom_sf"/>
</dbReference>
<dbReference type="InterPro" id="IPR013221">
    <property type="entry name" value="Mur_ligase_cen"/>
</dbReference>
<dbReference type="InterPro" id="IPR000713">
    <property type="entry name" value="Mur_ligase_N"/>
</dbReference>
<dbReference type="InterPro" id="IPR050061">
    <property type="entry name" value="MurCDEF_pg_biosynth"/>
</dbReference>
<dbReference type="InterPro" id="IPR005758">
    <property type="entry name" value="UDP-N-AcMur_Ala_ligase_MurC"/>
</dbReference>
<dbReference type="NCBIfam" id="TIGR01082">
    <property type="entry name" value="murC"/>
    <property type="match status" value="1"/>
</dbReference>
<dbReference type="PANTHER" id="PTHR43445:SF3">
    <property type="entry name" value="UDP-N-ACETYLMURAMATE--L-ALANINE LIGASE"/>
    <property type="match status" value="1"/>
</dbReference>
<dbReference type="PANTHER" id="PTHR43445">
    <property type="entry name" value="UDP-N-ACETYLMURAMATE--L-ALANINE LIGASE-RELATED"/>
    <property type="match status" value="1"/>
</dbReference>
<dbReference type="Pfam" id="PF01225">
    <property type="entry name" value="Mur_ligase"/>
    <property type="match status" value="1"/>
</dbReference>
<dbReference type="Pfam" id="PF02875">
    <property type="entry name" value="Mur_ligase_C"/>
    <property type="match status" value="1"/>
</dbReference>
<dbReference type="Pfam" id="PF08245">
    <property type="entry name" value="Mur_ligase_M"/>
    <property type="match status" value="1"/>
</dbReference>
<dbReference type="SUPFAM" id="SSF51984">
    <property type="entry name" value="MurCD N-terminal domain"/>
    <property type="match status" value="1"/>
</dbReference>
<dbReference type="SUPFAM" id="SSF53623">
    <property type="entry name" value="MurD-like peptide ligases, catalytic domain"/>
    <property type="match status" value="1"/>
</dbReference>
<dbReference type="SUPFAM" id="SSF53244">
    <property type="entry name" value="MurD-like peptide ligases, peptide-binding domain"/>
    <property type="match status" value="1"/>
</dbReference>
<keyword id="KW-0067">ATP-binding</keyword>
<keyword id="KW-0131">Cell cycle</keyword>
<keyword id="KW-0132">Cell division</keyword>
<keyword id="KW-0133">Cell shape</keyword>
<keyword id="KW-0961">Cell wall biogenesis/degradation</keyword>
<keyword id="KW-0963">Cytoplasm</keyword>
<keyword id="KW-0436">Ligase</keyword>
<keyword id="KW-0547">Nucleotide-binding</keyword>
<keyword id="KW-0573">Peptidoglycan synthesis</keyword>
<keyword id="KW-1185">Reference proteome</keyword>
<sequence>MTKTERYLQLRSMIPEMRRIKRIHFVGIGGAGMGGIAEVLVNEGYVVSGSDIAQNAVTDRLCLLGAKIHIGHGADNVQQADVVVVSTAINPQNPEIIAAKELRIPIVRRAEMLAELMRYRHGVAIAGTHGKTTTTSLIASLYGQAGRDPTFVIGGLLNSAGTNARLGTSRYLIAEADESDASFLHLQPMVSVVTNIEADHMDTYGGDFEKLKSTFVDFLHNLPFYGVAVVCIDDPVVREIMPRISRHIVTYGFRDDADVQALNFSQQGHQCRFTVRRKGKEDLDLLLNLPGQHNVLNALAAIAVATEDEIDDSAIIQALAEFQGIGRRFQHLGKFATPKGEVMLVDDYGHHPSEVAATIKAARAGWPEKRLVMAYQPHRYTRTRDLYEDFIEVLSQVDCLLLLDVYSAGEAPIPGADGRALCRSIRLRGQLDPIFIASPEQLAEVLPDVLQEGDLLLTQGAGNIGALSRKLAASELGFSTGATTEVKP</sequence>